<protein>
    <recommendedName>
        <fullName>Heat shock 70 kDa protein 13</fullName>
    </recommendedName>
    <alternativeName>
        <fullName>Microsomal stress-70 protein ATPase core</fullName>
    </alternativeName>
    <alternativeName>
        <fullName>Stress-70 protein chaperone microsome-associated 60 kDa protein</fullName>
    </alternativeName>
</protein>
<proteinExistence type="evidence at protein level"/>
<comment type="function">
    <text evidence="1">Has peptide-independent ATPase activity.</text>
</comment>
<comment type="subunit">
    <text evidence="1">Binds UBQLN2.</text>
</comment>
<comment type="subcellular location">
    <subcellularLocation>
        <location evidence="1">Microsome</location>
    </subcellularLocation>
    <subcellularLocation>
        <location evidence="1">Endoplasmic reticulum</location>
    </subcellularLocation>
</comment>
<comment type="similarity">
    <text evidence="4">Belongs to the heat shock protein 70 family.</text>
</comment>
<sequence length="471" mass="51795">MAGEMTILGSAVLTLLLAGYLAQQYLPLPTPKVIGIDLGTTYCSVGVFFPGTGKVKVIPDENGHISIPSMVSFTDGDVYVGYESLELADSNPQNTIYDAKRFIGKIFTPEELEAEIGRYPFKVLHKNGMAEFSVTSNETIIVSPEYVGSRLLLKLKEMAEKYLGMPVANAVISVPAEFDLQQRNSTIQAANLAGLKILRVINEPTAAAMAYGLHKVDVFYVLVIDLGGGTLDVSLLNKQGGMFLTRAMSGNNKLGGQDFNQRLLQYLYKEIYQTYGFLPSRKEEIHRLRQAVEMVKLNLTLHQSAQVSVLLTVEENDSQKPQNADSKLPEDQLTPGDGHHVNRVFRPGLSDSTSGKSQVLFETEVSRKLFNTLNEDLFQKILVPIQQVLKEGLLDKTEIDEVVLVGGSTRIPRIRQVIQEFFGKDPNTSVDPDLAVVTGVAIQAGIDGGSWPLQVSALEIPNKHLQKTNFN</sequence>
<accession>O35162</accession>
<accession>Q6IRE1</accession>
<reference key="1">
    <citation type="journal article" date="1994" name="EMBO J.">
        <title>Stch encodes the 'ATPase core' of a microsomal stress 70 protein.</title>
        <authorList>
            <person name="Otterson G.A."/>
            <person name="Flynn G.C."/>
            <person name="Kratzke R.A."/>
            <person name="Coxon A."/>
            <person name="Johnston P.G."/>
            <person name="Kaye F.J."/>
        </authorList>
    </citation>
    <scope>NUCLEOTIDE SEQUENCE [MRNA]</scope>
</reference>
<reference key="2">
    <citation type="journal article" date="1997" name="Gene">
        <title>A 'core ATPase', Hsp70-like structure is conserved in human, rat, and C. elegans STCH proteins.</title>
        <authorList>
            <person name="Otterson G.A."/>
            <person name="Kaye F.J."/>
        </authorList>
    </citation>
    <scope>NUCLEOTIDE SEQUENCE [MRNA]</scope>
</reference>
<reference key="3">
    <citation type="journal article" date="2004" name="Genome Res.">
        <title>The status, quality, and expansion of the NIH full-length cDNA project: the Mammalian Gene Collection (MGC).</title>
        <authorList>
            <consortium name="The MGC Project Team"/>
        </authorList>
    </citation>
    <scope>NUCLEOTIDE SEQUENCE [LARGE SCALE MRNA]</scope>
    <source>
        <tissue>Heart</tissue>
    </source>
</reference>
<reference key="4">
    <citation type="journal article" date="2013" name="J. Proteome Res.">
        <title>Site-specific glycan-peptide analysis for determination of N-glycoproteome heterogeneity.</title>
        <authorList>
            <person name="Parker B.L."/>
            <person name="Thaysen-Andersen M."/>
            <person name="Solis N."/>
            <person name="Scott N.E."/>
            <person name="Larsen M.R."/>
            <person name="Graham M.E."/>
            <person name="Packer N.H."/>
            <person name="Cordwell S.J."/>
        </authorList>
    </citation>
    <scope>GLYCOSYLATION [LARGE SCALE ANALYSIS] AT ASN-184</scope>
    <scope>IDENTIFICATION BY MASS SPECTROMETRY [LARGE SCALE ANALYSIS]</scope>
    <source>
        <tissue>Brain</tissue>
    </source>
</reference>
<feature type="signal peptide" evidence="2">
    <location>
        <begin position="1"/>
        <end position="22"/>
    </location>
</feature>
<feature type="chain" id="PRO_0000013561" description="Heat shock 70 kDa protein 13">
    <location>
        <begin position="23"/>
        <end position="471"/>
    </location>
</feature>
<feature type="region of interest" description="Disordered" evidence="3">
    <location>
        <begin position="316"/>
        <end position="339"/>
    </location>
</feature>
<feature type="glycosylation site" description="N-linked (GlcNAc...) asparagine" evidence="5">
    <location>
        <position position="184"/>
    </location>
</feature>
<feature type="sequence conflict" description="In Ref. 1 and 2." evidence="4" ref="1 2">
    <original>G</original>
    <variation>A</variation>
    <location>
        <position position="355"/>
    </location>
</feature>
<feature type="sequence conflict" description="In Ref. 1 and 2." evidence="4" ref="1 2">
    <original>S</original>
    <variation>C</variation>
    <location>
        <position position="450"/>
    </location>
</feature>
<evidence type="ECO:0000250" key="1"/>
<evidence type="ECO:0000255" key="2"/>
<evidence type="ECO:0000256" key="3">
    <source>
        <dbReference type="SAM" id="MobiDB-lite"/>
    </source>
</evidence>
<evidence type="ECO:0000305" key="4"/>
<evidence type="ECO:0007744" key="5">
    <source>
    </source>
</evidence>
<name>HSP13_RAT</name>
<gene>
    <name type="primary">Hspa13</name>
    <name type="synonym">Stch</name>
</gene>
<organism>
    <name type="scientific">Rattus norvegicus</name>
    <name type="common">Rat</name>
    <dbReference type="NCBI Taxonomy" id="10116"/>
    <lineage>
        <taxon>Eukaryota</taxon>
        <taxon>Metazoa</taxon>
        <taxon>Chordata</taxon>
        <taxon>Craniata</taxon>
        <taxon>Vertebrata</taxon>
        <taxon>Euteleostomi</taxon>
        <taxon>Mammalia</taxon>
        <taxon>Eutheria</taxon>
        <taxon>Euarchontoglires</taxon>
        <taxon>Glires</taxon>
        <taxon>Rodentia</taxon>
        <taxon>Myomorpha</taxon>
        <taxon>Muroidea</taxon>
        <taxon>Muridae</taxon>
        <taxon>Murinae</taxon>
        <taxon>Rattus</taxon>
    </lineage>
</organism>
<keyword id="KW-0067">ATP-binding</keyword>
<keyword id="KW-0256">Endoplasmic reticulum</keyword>
<keyword id="KW-0325">Glycoprotein</keyword>
<keyword id="KW-0492">Microsome</keyword>
<keyword id="KW-0547">Nucleotide-binding</keyword>
<keyword id="KW-1185">Reference proteome</keyword>
<keyword id="KW-0732">Signal</keyword>
<dbReference type="EMBL" id="AF006617">
    <property type="protein sequence ID" value="AAB88258.1"/>
    <property type="molecule type" value="mRNA"/>
</dbReference>
<dbReference type="EMBL" id="BC070954">
    <property type="protein sequence ID" value="AAH70954.1"/>
    <property type="molecule type" value="mRNA"/>
</dbReference>
<dbReference type="RefSeq" id="NP_062144.2">
    <property type="nucleotide sequence ID" value="NM_019271.2"/>
</dbReference>
<dbReference type="SMR" id="O35162"/>
<dbReference type="FunCoup" id="O35162">
    <property type="interactions" value="2221"/>
</dbReference>
<dbReference type="IntAct" id="O35162">
    <property type="interactions" value="4"/>
</dbReference>
<dbReference type="STRING" id="10116.ENSRNOP00000070174"/>
<dbReference type="GlyCosmos" id="O35162">
    <property type="glycosylation" value="1 site, 4 glycans"/>
</dbReference>
<dbReference type="GlyGen" id="O35162">
    <property type="glycosylation" value="1 site, 4 N-linked glycans (1 site)"/>
</dbReference>
<dbReference type="iPTMnet" id="O35162"/>
<dbReference type="PhosphoSitePlus" id="O35162"/>
<dbReference type="jPOST" id="O35162"/>
<dbReference type="PaxDb" id="10116-ENSRNOP00000049545"/>
<dbReference type="Ensembl" id="ENSRNOT00000109029.1">
    <property type="protein sequence ID" value="ENSRNOP00000095281.1"/>
    <property type="gene ID" value="ENSRNOG00000060979.2"/>
</dbReference>
<dbReference type="GeneID" id="29734"/>
<dbReference type="KEGG" id="rno:29734"/>
<dbReference type="UCSC" id="RGD:3775">
    <property type="organism name" value="rat"/>
</dbReference>
<dbReference type="AGR" id="RGD:3775"/>
<dbReference type="CTD" id="6782"/>
<dbReference type="RGD" id="3775">
    <property type="gene designation" value="Hspa13"/>
</dbReference>
<dbReference type="eggNOG" id="KOG0101">
    <property type="taxonomic scope" value="Eukaryota"/>
</dbReference>
<dbReference type="GeneTree" id="ENSGT00890000139503"/>
<dbReference type="HOGENOM" id="CLU_005965_0_3_1"/>
<dbReference type="InParanoid" id="O35162"/>
<dbReference type="OrthoDB" id="34133at9989"/>
<dbReference type="PhylomeDB" id="O35162"/>
<dbReference type="TreeFam" id="TF105047"/>
<dbReference type="Reactome" id="R-RNO-3371453">
    <property type="pathway name" value="Regulation of HSF1-mediated heat shock response"/>
</dbReference>
<dbReference type="PRO" id="PR:O35162"/>
<dbReference type="Proteomes" id="UP000002494">
    <property type="component" value="Chromosome 11"/>
</dbReference>
<dbReference type="Bgee" id="ENSRNOG00000060979">
    <property type="expression patterns" value="Expressed in Ammon's horn and 19 other cell types or tissues"/>
</dbReference>
<dbReference type="ExpressionAtlas" id="O35162">
    <property type="expression patterns" value="baseline and differential"/>
</dbReference>
<dbReference type="GO" id="GO:0005737">
    <property type="term" value="C:cytoplasm"/>
    <property type="evidence" value="ECO:0000318"/>
    <property type="project" value="GO_Central"/>
</dbReference>
<dbReference type="GO" id="GO:0005829">
    <property type="term" value="C:cytosol"/>
    <property type="evidence" value="ECO:0000318"/>
    <property type="project" value="GO_Central"/>
</dbReference>
<dbReference type="GO" id="GO:0005783">
    <property type="term" value="C:endoplasmic reticulum"/>
    <property type="evidence" value="ECO:0007669"/>
    <property type="project" value="UniProtKB-SubCell"/>
</dbReference>
<dbReference type="GO" id="GO:0005634">
    <property type="term" value="C:nucleus"/>
    <property type="evidence" value="ECO:0000318"/>
    <property type="project" value="GO_Central"/>
</dbReference>
<dbReference type="GO" id="GO:0005886">
    <property type="term" value="C:plasma membrane"/>
    <property type="evidence" value="ECO:0000318"/>
    <property type="project" value="GO_Central"/>
</dbReference>
<dbReference type="GO" id="GO:0005524">
    <property type="term" value="F:ATP binding"/>
    <property type="evidence" value="ECO:0007669"/>
    <property type="project" value="UniProtKB-KW"/>
</dbReference>
<dbReference type="GO" id="GO:0016887">
    <property type="term" value="F:ATP hydrolysis activity"/>
    <property type="evidence" value="ECO:0000318"/>
    <property type="project" value="GO_Central"/>
</dbReference>
<dbReference type="GO" id="GO:0140662">
    <property type="term" value="F:ATP-dependent protein folding chaperone"/>
    <property type="evidence" value="ECO:0007669"/>
    <property type="project" value="InterPro"/>
</dbReference>
<dbReference type="GO" id="GO:0031072">
    <property type="term" value="F:heat shock protein binding"/>
    <property type="evidence" value="ECO:0000318"/>
    <property type="project" value="GO_Central"/>
</dbReference>
<dbReference type="GO" id="GO:0044183">
    <property type="term" value="F:protein folding chaperone"/>
    <property type="evidence" value="ECO:0000318"/>
    <property type="project" value="GO_Central"/>
</dbReference>
<dbReference type="GO" id="GO:0051085">
    <property type="term" value="P:chaperone cofactor-dependent protein refolding"/>
    <property type="evidence" value="ECO:0000318"/>
    <property type="project" value="GO_Central"/>
</dbReference>
<dbReference type="GO" id="GO:0042026">
    <property type="term" value="P:protein refolding"/>
    <property type="evidence" value="ECO:0000318"/>
    <property type="project" value="GO_Central"/>
</dbReference>
<dbReference type="CDD" id="cd10237">
    <property type="entry name" value="ASKHA_NBD_HSP70_HSPA13"/>
    <property type="match status" value="1"/>
</dbReference>
<dbReference type="FunFam" id="3.30.30.30:FF:000007">
    <property type="entry name" value="Heat shock 70 kDa protein 13"/>
    <property type="match status" value="1"/>
</dbReference>
<dbReference type="FunFam" id="3.30.420.40:FF:000099">
    <property type="entry name" value="Heat shock 70 kDa protein 13"/>
    <property type="match status" value="1"/>
</dbReference>
<dbReference type="FunFam" id="3.30.420.40:FF:000103">
    <property type="entry name" value="Heat shock 70 kDa protein 13"/>
    <property type="match status" value="1"/>
</dbReference>
<dbReference type="FunFam" id="3.90.640.10:FF:000032">
    <property type="entry name" value="heat shock 70 kDa protein 13"/>
    <property type="match status" value="1"/>
</dbReference>
<dbReference type="FunFam" id="3.30.420.40:FF:000110">
    <property type="entry name" value="heat shock 70 kDa protein 13 isoform X1"/>
    <property type="match status" value="1"/>
</dbReference>
<dbReference type="Gene3D" id="3.30.420.40">
    <property type="match status" value="2"/>
</dbReference>
<dbReference type="Gene3D" id="3.90.640.10">
    <property type="entry name" value="Actin, Chain A, domain 4"/>
    <property type="match status" value="1"/>
</dbReference>
<dbReference type="InterPro" id="IPR043129">
    <property type="entry name" value="ATPase_NBD"/>
</dbReference>
<dbReference type="InterPro" id="IPR018181">
    <property type="entry name" value="Heat_shock_70_CS"/>
</dbReference>
<dbReference type="InterPro" id="IPR013126">
    <property type="entry name" value="Hsp_70_fam"/>
</dbReference>
<dbReference type="InterPro" id="IPR042048">
    <property type="entry name" value="HSPA13"/>
</dbReference>
<dbReference type="PANTHER" id="PTHR19375">
    <property type="entry name" value="HEAT SHOCK PROTEIN 70KDA"/>
    <property type="match status" value="1"/>
</dbReference>
<dbReference type="Pfam" id="PF00012">
    <property type="entry name" value="HSP70"/>
    <property type="match status" value="2"/>
</dbReference>
<dbReference type="PRINTS" id="PR00301">
    <property type="entry name" value="HEATSHOCK70"/>
</dbReference>
<dbReference type="SUPFAM" id="SSF53067">
    <property type="entry name" value="Actin-like ATPase domain"/>
    <property type="match status" value="2"/>
</dbReference>
<dbReference type="PROSITE" id="PS00297">
    <property type="entry name" value="HSP70_1"/>
    <property type="match status" value="1"/>
</dbReference>
<dbReference type="PROSITE" id="PS00329">
    <property type="entry name" value="HSP70_2"/>
    <property type="match status" value="1"/>
</dbReference>
<dbReference type="PROSITE" id="PS01036">
    <property type="entry name" value="HSP70_3"/>
    <property type="match status" value="1"/>
</dbReference>